<name>RL16_CYTH3</name>
<keyword id="KW-1185">Reference proteome</keyword>
<keyword id="KW-0687">Ribonucleoprotein</keyword>
<keyword id="KW-0689">Ribosomal protein</keyword>
<keyword id="KW-0694">RNA-binding</keyword>
<keyword id="KW-0699">rRNA-binding</keyword>
<keyword id="KW-0820">tRNA-binding</keyword>
<proteinExistence type="inferred from homology"/>
<evidence type="ECO:0000255" key="1">
    <source>
        <dbReference type="HAMAP-Rule" id="MF_01342"/>
    </source>
</evidence>
<evidence type="ECO:0000305" key="2"/>
<protein>
    <recommendedName>
        <fullName evidence="1">Large ribosomal subunit protein uL16</fullName>
    </recommendedName>
    <alternativeName>
        <fullName evidence="2">50S ribosomal protein L16</fullName>
    </alternativeName>
</protein>
<feature type="chain" id="PRO_1000054614" description="Large ribosomal subunit protein uL16">
    <location>
        <begin position="1"/>
        <end position="140"/>
    </location>
</feature>
<organism>
    <name type="scientific">Cytophaga hutchinsonii (strain ATCC 33406 / DSM 1761 / CIP 103989 / NBRC 15051 / NCIMB 9469 / D465)</name>
    <dbReference type="NCBI Taxonomy" id="269798"/>
    <lineage>
        <taxon>Bacteria</taxon>
        <taxon>Pseudomonadati</taxon>
        <taxon>Bacteroidota</taxon>
        <taxon>Cytophagia</taxon>
        <taxon>Cytophagales</taxon>
        <taxon>Cytophagaceae</taxon>
        <taxon>Cytophaga</taxon>
    </lineage>
</organism>
<reference key="1">
    <citation type="journal article" date="2007" name="Appl. Environ. Microbiol.">
        <title>Genome sequence of the cellulolytic gliding bacterium Cytophaga hutchinsonii.</title>
        <authorList>
            <person name="Xie G."/>
            <person name="Bruce D.C."/>
            <person name="Challacombe J.F."/>
            <person name="Chertkov O."/>
            <person name="Detter J.C."/>
            <person name="Gilna P."/>
            <person name="Han C.S."/>
            <person name="Lucas S."/>
            <person name="Misra M."/>
            <person name="Myers G.L."/>
            <person name="Richardson P."/>
            <person name="Tapia R."/>
            <person name="Thayer N."/>
            <person name="Thompson L.S."/>
            <person name="Brettin T.S."/>
            <person name="Henrissat B."/>
            <person name="Wilson D.B."/>
            <person name="McBride M.J."/>
        </authorList>
    </citation>
    <scope>NUCLEOTIDE SEQUENCE [LARGE SCALE GENOMIC DNA]</scope>
    <source>
        <strain>ATCC 33406 / DSM 1761 / JCM 20678 / CIP 103989 / IAM 12607 / NBRC 15051 / NCIMB 9469 / D465</strain>
    </source>
</reference>
<comment type="function">
    <text evidence="1">Binds 23S rRNA and is also seen to make contacts with the A and possibly P site tRNAs.</text>
</comment>
<comment type="subunit">
    <text evidence="1">Part of the 50S ribosomal subunit.</text>
</comment>
<comment type="similarity">
    <text evidence="1">Belongs to the universal ribosomal protein uL16 family.</text>
</comment>
<dbReference type="EMBL" id="CP000383">
    <property type="protein sequence ID" value="ABG60395.1"/>
    <property type="molecule type" value="Genomic_DNA"/>
</dbReference>
<dbReference type="RefSeq" id="WP_011586504.1">
    <property type="nucleotide sequence ID" value="NC_008255.1"/>
</dbReference>
<dbReference type="SMR" id="Q11QB9"/>
<dbReference type="STRING" id="269798.CHU_3155"/>
<dbReference type="KEGG" id="chu:CHU_3155"/>
<dbReference type="eggNOG" id="COG0197">
    <property type="taxonomic scope" value="Bacteria"/>
</dbReference>
<dbReference type="HOGENOM" id="CLU_078858_2_1_10"/>
<dbReference type="OrthoDB" id="9802589at2"/>
<dbReference type="Proteomes" id="UP000001822">
    <property type="component" value="Chromosome"/>
</dbReference>
<dbReference type="GO" id="GO:0022625">
    <property type="term" value="C:cytosolic large ribosomal subunit"/>
    <property type="evidence" value="ECO:0007669"/>
    <property type="project" value="TreeGrafter"/>
</dbReference>
<dbReference type="GO" id="GO:0019843">
    <property type="term" value="F:rRNA binding"/>
    <property type="evidence" value="ECO:0007669"/>
    <property type="project" value="UniProtKB-UniRule"/>
</dbReference>
<dbReference type="GO" id="GO:0003735">
    <property type="term" value="F:structural constituent of ribosome"/>
    <property type="evidence" value="ECO:0007669"/>
    <property type="project" value="InterPro"/>
</dbReference>
<dbReference type="GO" id="GO:0000049">
    <property type="term" value="F:tRNA binding"/>
    <property type="evidence" value="ECO:0007669"/>
    <property type="project" value="UniProtKB-KW"/>
</dbReference>
<dbReference type="GO" id="GO:0006412">
    <property type="term" value="P:translation"/>
    <property type="evidence" value="ECO:0007669"/>
    <property type="project" value="UniProtKB-UniRule"/>
</dbReference>
<dbReference type="CDD" id="cd01433">
    <property type="entry name" value="Ribosomal_L16_L10e"/>
    <property type="match status" value="1"/>
</dbReference>
<dbReference type="FunFam" id="3.90.1170.10:FF:000001">
    <property type="entry name" value="50S ribosomal protein L16"/>
    <property type="match status" value="1"/>
</dbReference>
<dbReference type="Gene3D" id="3.90.1170.10">
    <property type="entry name" value="Ribosomal protein L10e/L16"/>
    <property type="match status" value="1"/>
</dbReference>
<dbReference type="HAMAP" id="MF_01342">
    <property type="entry name" value="Ribosomal_uL16"/>
    <property type="match status" value="1"/>
</dbReference>
<dbReference type="InterPro" id="IPR047873">
    <property type="entry name" value="Ribosomal_uL16"/>
</dbReference>
<dbReference type="InterPro" id="IPR000114">
    <property type="entry name" value="Ribosomal_uL16_bact-type"/>
</dbReference>
<dbReference type="InterPro" id="IPR020798">
    <property type="entry name" value="Ribosomal_uL16_CS"/>
</dbReference>
<dbReference type="InterPro" id="IPR016180">
    <property type="entry name" value="Ribosomal_uL16_dom"/>
</dbReference>
<dbReference type="InterPro" id="IPR036920">
    <property type="entry name" value="Ribosomal_uL16_sf"/>
</dbReference>
<dbReference type="NCBIfam" id="TIGR01164">
    <property type="entry name" value="rplP_bact"/>
    <property type="match status" value="1"/>
</dbReference>
<dbReference type="PANTHER" id="PTHR12220">
    <property type="entry name" value="50S/60S RIBOSOMAL PROTEIN L16"/>
    <property type="match status" value="1"/>
</dbReference>
<dbReference type="PANTHER" id="PTHR12220:SF13">
    <property type="entry name" value="LARGE RIBOSOMAL SUBUNIT PROTEIN UL16M"/>
    <property type="match status" value="1"/>
</dbReference>
<dbReference type="Pfam" id="PF00252">
    <property type="entry name" value="Ribosomal_L16"/>
    <property type="match status" value="1"/>
</dbReference>
<dbReference type="PRINTS" id="PR00060">
    <property type="entry name" value="RIBOSOMALL16"/>
</dbReference>
<dbReference type="SUPFAM" id="SSF54686">
    <property type="entry name" value="Ribosomal protein L16p/L10e"/>
    <property type="match status" value="1"/>
</dbReference>
<dbReference type="PROSITE" id="PS00586">
    <property type="entry name" value="RIBOSOMAL_L16_1"/>
    <property type="match status" value="1"/>
</dbReference>
<dbReference type="PROSITE" id="PS00701">
    <property type="entry name" value="RIBOSOMAL_L16_2"/>
    <property type="match status" value="1"/>
</dbReference>
<gene>
    <name evidence="1" type="primary">rplP</name>
    <name type="ordered locus">CHU_3155</name>
</gene>
<accession>Q11QB9</accession>
<sequence length="140" mass="15660">MLQPKRTKYRKQQKGRVTGVATRGHRIAFGSFAIKSLEGGWITARQIEAARIAMTRAMKREGQVWIRVFPDKPITQKPAEVRMGKGKGAPEYWVACIKPGTILFESGGVSIETAQESLRLAAQKLPFKTKFIVRPDYVAS</sequence>